<feature type="chain" id="PRO_0000051665" description="Cytochrome P450 2A3">
    <location>
        <begin position="1"/>
        <end position="494"/>
    </location>
</feature>
<feature type="binding site" description="axial binding residue">
    <location>
        <position position="439"/>
    </location>
    <ligand>
        <name>heme</name>
        <dbReference type="ChEBI" id="CHEBI:30413"/>
    </ligand>
    <ligandPart>
        <name>Fe</name>
        <dbReference type="ChEBI" id="CHEBI:18248"/>
    </ligandPart>
</feature>
<feature type="modified residue" description="Phosphoserine" evidence="2">
    <location>
        <position position="131"/>
    </location>
</feature>
<feature type="modified residue" description="N6-acetyllysine" evidence="3">
    <location>
        <position position="379"/>
    </location>
</feature>
<feature type="sequence conflict" description="In Ref. 2; AAA88511." evidence="4" ref="2">
    <original>W</original>
    <variation>G</variation>
    <location>
        <position position="109"/>
    </location>
</feature>
<feature type="sequence conflict" description="In Ref. 2; AAA88511." evidence="4" ref="2">
    <original>I</original>
    <variation>N</variation>
    <location>
        <position position="335"/>
    </location>
</feature>
<organism>
    <name type="scientific">Rattus norvegicus</name>
    <name type="common">Rat</name>
    <dbReference type="NCBI Taxonomy" id="10116"/>
    <lineage>
        <taxon>Eukaryota</taxon>
        <taxon>Metazoa</taxon>
        <taxon>Chordata</taxon>
        <taxon>Craniata</taxon>
        <taxon>Vertebrata</taxon>
        <taxon>Euteleostomi</taxon>
        <taxon>Mammalia</taxon>
        <taxon>Eutheria</taxon>
        <taxon>Euarchontoglires</taxon>
        <taxon>Glires</taxon>
        <taxon>Rodentia</taxon>
        <taxon>Myomorpha</taxon>
        <taxon>Muroidea</taxon>
        <taxon>Muridae</taxon>
        <taxon>Murinae</taxon>
        <taxon>Rattus</taxon>
    </lineage>
</organism>
<evidence type="ECO:0000250" key="1"/>
<evidence type="ECO:0000250" key="2">
    <source>
        <dbReference type="UniProtKB" id="P00176"/>
    </source>
</evidence>
<evidence type="ECO:0000250" key="3">
    <source>
        <dbReference type="UniProtKB" id="Q64458"/>
    </source>
</evidence>
<evidence type="ECO:0000305" key="4"/>
<comment type="function">
    <text>Cytochromes P450 are a group of heme-thiolate monooxygenases. In liver microsomes, this enzyme is involved in an NADPH-dependent electron transport pathway. It oxidizes a variety of structurally unrelated compounds, including steroids, fatty acids, and xenobiotics.</text>
</comment>
<comment type="catalytic activity">
    <reaction>
        <text>an organic molecule + reduced [NADPH--hemoprotein reductase] + O2 = an alcohol + oxidized [NADPH--hemoprotein reductase] + H2O + H(+)</text>
        <dbReference type="Rhea" id="RHEA:17149"/>
        <dbReference type="Rhea" id="RHEA-COMP:11964"/>
        <dbReference type="Rhea" id="RHEA-COMP:11965"/>
        <dbReference type="ChEBI" id="CHEBI:15377"/>
        <dbReference type="ChEBI" id="CHEBI:15378"/>
        <dbReference type="ChEBI" id="CHEBI:15379"/>
        <dbReference type="ChEBI" id="CHEBI:30879"/>
        <dbReference type="ChEBI" id="CHEBI:57618"/>
        <dbReference type="ChEBI" id="CHEBI:58210"/>
        <dbReference type="ChEBI" id="CHEBI:142491"/>
        <dbReference type="EC" id="1.14.14.1"/>
    </reaction>
</comment>
<comment type="cofactor">
    <cofactor evidence="1">
        <name>heme</name>
        <dbReference type="ChEBI" id="CHEBI:30413"/>
    </cofactor>
</comment>
<comment type="subcellular location">
    <subcellularLocation>
        <location>Endoplasmic reticulum membrane</location>
        <topology>Peripheral membrane protein</topology>
    </subcellularLocation>
    <subcellularLocation>
        <location>Microsome membrane</location>
        <topology>Peripheral membrane protein</topology>
    </subcellularLocation>
</comment>
<comment type="tissue specificity">
    <text>Lung.</text>
</comment>
<comment type="induction">
    <text>By 3-methylcholanthrene (3MC).</text>
</comment>
<comment type="similarity">
    <text evidence="4">Belongs to the cytochrome P450 family.</text>
</comment>
<sequence>MLASGLLLVASVAFLSVLVLMSVWKQRKLSGKLPPGPTPLPFIGNYLQLNTEKMYSSLMKISQRYGPVFTIHLGPRRVVVLCGQEAVKEALVDQAEEFSGRGEQATFDWLFKGYGVAFSSGERAKQLRRFSIATLRDFGVGKRGIEERIQEEAGFLIESFRKTNGALIDPTFYLSRTVSNVISSIVFGDRFDYEDKEFLSLLRMMLGSFQFTATSTGQLYEMFSSVMKHLPGPQQQAFKELQGLEDFITKKVEQNQRTLDPNSPRDFIDSFLIRMLEEKKNPNTEFYMKNLVLTTLNLFFAGTETVSTTLRYGFLLLMKHPDIEAKVHEEIDRVIGRNRQAKYEDRMKMPYTEAVIHEIQRFADMIPMGLARRVTKDTKFREFLLPKGTEVFPMLGSVLKDPKFFSNPNDFNPKHFLDDKGQFKKSDAFVPFSIGKRYCFGEGLARMELFLFLTNIMQNFCFKSPQAPQDIDVSPRLVGFATIPPNYTMSFLSR</sequence>
<protein>
    <recommendedName>
        <fullName>Cytochrome P450 2A3</fullName>
        <ecNumber>1.14.14.1</ecNumber>
    </recommendedName>
    <alternativeName>
        <fullName>CYPIIA3</fullName>
    </alternativeName>
    <alternativeName>
        <fullName>Coumarin 7-hydroxylase</fullName>
    </alternativeName>
</protein>
<gene>
    <name type="primary">Cyp2a3</name>
    <name type="synonym">Cyp2a-3</name>
    <name type="synonym">Cyp2a3a</name>
</gene>
<keyword id="KW-0007">Acetylation</keyword>
<keyword id="KW-0256">Endoplasmic reticulum</keyword>
<keyword id="KW-0349">Heme</keyword>
<keyword id="KW-0408">Iron</keyword>
<keyword id="KW-0472">Membrane</keyword>
<keyword id="KW-0479">Metal-binding</keyword>
<keyword id="KW-0492">Microsome</keyword>
<keyword id="KW-0503">Monooxygenase</keyword>
<keyword id="KW-0560">Oxidoreductase</keyword>
<keyword id="KW-0597">Phosphoprotein</keyword>
<keyword id="KW-1185">Reference proteome</keyword>
<accession>P20812</accession>
<reference key="1">
    <citation type="journal article" date="1990" name="Nucleic Acids Res.">
        <title>Complete sequence of the rat CYP2A3 gene specifically transcribed in lung.</title>
        <authorList>
            <person name="Ueno T."/>
            <person name="Gonzalez F."/>
        </authorList>
    </citation>
    <scope>NUCLEOTIDE SEQUENCE [GENOMIC DNA]</scope>
    <source>
        <strain>Sprague-Dawley</strain>
        <tissue>Lung</tissue>
    </source>
</reference>
<reference key="2">
    <citation type="journal article" date="1989" name="Biochemistry">
        <title>Identification of a novel P450 expressed in rat lung: cDNA cloning and sequence, chromosome mapping, and induction by 3-methylcholanthrene.</title>
        <authorList>
            <person name="Kimura S."/>
            <person name="Kozak C.A."/>
            <person name="Gonzalez F.J."/>
        </authorList>
    </citation>
    <scope>NUCLEOTIDE SEQUENCE [MRNA] OF 8-494</scope>
    <source>
        <tissue>Lung</tissue>
    </source>
</reference>
<dbReference type="EC" id="1.14.14.1"/>
<dbReference type="EMBL" id="M33190">
    <property type="protein sequence ID" value="AAA41022.1"/>
    <property type="molecule type" value="Genomic_DNA"/>
</dbReference>
<dbReference type="EMBL" id="J02852">
    <property type="protein sequence ID" value="AAA88511.1"/>
    <property type="molecule type" value="mRNA"/>
</dbReference>
<dbReference type="PIR" id="S15056">
    <property type="entry name" value="A32030"/>
</dbReference>
<dbReference type="RefSeq" id="NP_036674.1">
    <property type="nucleotide sequence ID" value="NM_012542.2"/>
</dbReference>
<dbReference type="SMR" id="P20812"/>
<dbReference type="FunCoup" id="P20812">
    <property type="interactions" value="57"/>
</dbReference>
<dbReference type="GlyGen" id="P20812">
    <property type="glycosylation" value="1 site"/>
</dbReference>
<dbReference type="PhosphoSitePlus" id="P20812"/>
<dbReference type="PaxDb" id="10116-ENSRNOP00000028231"/>
<dbReference type="GeneID" id="24299"/>
<dbReference type="KEGG" id="rno:24299"/>
<dbReference type="UCSC" id="RGD:2465">
    <property type="organism name" value="rat"/>
</dbReference>
<dbReference type="AGR" id="RGD:2465"/>
<dbReference type="CTD" id="24299"/>
<dbReference type="RGD" id="2465">
    <property type="gene designation" value="Cyp2a3"/>
</dbReference>
<dbReference type="eggNOG" id="KOG0156">
    <property type="taxonomic scope" value="Eukaryota"/>
</dbReference>
<dbReference type="InParanoid" id="P20812"/>
<dbReference type="OrthoDB" id="57189at9989"/>
<dbReference type="Reactome" id="R-RNO-211935">
    <property type="pathway name" value="Fatty acids"/>
</dbReference>
<dbReference type="Reactome" id="R-RNO-211981">
    <property type="pathway name" value="Xenobiotics"/>
</dbReference>
<dbReference type="Reactome" id="R-RNO-211999">
    <property type="pathway name" value="CYP2E1 reactions"/>
</dbReference>
<dbReference type="Reactome" id="R-RNO-5423646">
    <property type="pathway name" value="Aflatoxin activation and detoxification"/>
</dbReference>
<dbReference type="PRO" id="PR:P20812"/>
<dbReference type="Proteomes" id="UP000002494">
    <property type="component" value="Unplaced"/>
</dbReference>
<dbReference type="GO" id="GO:0005737">
    <property type="term" value="C:cytoplasm"/>
    <property type="evidence" value="ECO:0000318"/>
    <property type="project" value="GO_Central"/>
</dbReference>
<dbReference type="GO" id="GO:0005789">
    <property type="term" value="C:endoplasmic reticulum membrane"/>
    <property type="evidence" value="ECO:0007669"/>
    <property type="project" value="UniProtKB-SubCell"/>
</dbReference>
<dbReference type="GO" id="GO:0043231">
    <property type="term" value="C:intracellular membrane-bounded organelle"/>
    <property type="evidence" value="ECO:0000318"/>
    <property type="project" value="GO_Central"/>
</dbReference>
<dbReference type="GO" id="GO:0008392">
    <property type="term" value="F:arachidonate epoxygenase activity"/>
    <property type="evidence" value="ECO:0000318"/>
    <property type="project" value="GO_Central"/>
</dbReference>
<dbReference type="GO" id="GO:0020037">
    <property type="term" value="F:heme binding"/>
    <property type="evidence" value="ECO:0000318"/>
    <property type="project" value="GO_Central"/>
</dbReference>
<dbReference type="GO" id="GO:0005506">
    <property type="term" value="F:iron ion binding"/>
    <property type="evidence" value="ECO:0007669"/>
    <property type="project" value="InterPro"/>
</dbReference>
<dbReference type="GO" id="GO:0004497">
    <property type="term" value="F:monooxygenase activity"/>
    <property type="evidence" value="ECO:0000304"/>
    <property type="project" value="RGD"/>
</dbReference>
<dbReference type="GO" id="GO:0016712">
    <property type="term" value="F:oxidoreductase activity, acting on paired donors, with incorporation or reduction of molecular oxygen, reduced flavin or flavoprotein as one donor, and incorporation of one atom of oxygen"/>
    <property type="evidence" value="ECO:0000318"/>
    <property type="project" value="GO_Central"/>
</dbReference>
<dbReference type="GO" id="GO:0019825">
    <property type="term" value="F:oxygen binding"/>
    <property type="evidence" value="ECO:0000304"/>
    <property type="project" value="RGD"/>
</dbReference>
<dbReference type="GO" id="GO:0009804">
    <property type="term" value="P:coumarin metabolic process"/>
    <property type="evidence" value="ECO:0000318"/>
    <property type="project" value="GO_Central"/>
</dbReference>
<dbReference type="GO" id="GO:0019373">
    <property type="term" value="P:epoxygenase P450 pathway"/>
    <property type="evidence" value="ECO:0000318"/>
    <property type="project" value="GO_Central"/>
</dbReference>
<dbReference type="GO" id="GO:0035634">
    <property type="term" value="P:response to stilbenoid"/>
    <property type="evidence" value="ECO:0000266"/>
    <property type="project" value="RGD"/>
</dbReference>
<dbReference type="GO" id="GO:0006805">
    <property type="term" value="P:xenobiotic metabolic process"/>
    <property type="evidence" value="ECO:0000318"/>
    <property type="project" value="GO_Central"/>
</dbReference>
<dbReference type="CDD" id="cd20668">
    <property type="entry name" value="CYP2A"/>
    <property type="match status" value="1"/>
</dbReference>
<dbReference type="FunFam" id="1.10.630.10:FF:000238">
    <property type="entry name" value="Cytochrome P450 2A6"/>
    <property type="match status" value="1"/>
</dbReference>
<dbReference type="Gene3D" id="1.10.630.10">
    <property type="entry name" value="Cytochrome P450"/>
    <property type="match status" value="1"/>
</dbReference>
<dbReference type="InterPro" id="IPR001128">
    <property type="entry name" value="Cyt_P450"/>
</dbReference>
<dbReference type="InterPro" id="IPR017972">
    <property type="entry name" value="Cyt_P450_CS"/>
</dbReference>
<dbReference type="InterPro" id="IPR002401">
    <property type="entry name" value="Cyt_P450_E_grp-I"/>
</dbReference>
<dbReference type="InterPro" id="IPR008067">
    <property type="entry name" value="Cyt_P450_E_grp-I_CYP2A-like"/>
</dbReference>
<dbReference type="InterPro" id="IPR036396">
    <property type="entry name" value="Cyt_P450_sf"/>
</dbReference>
<dbReference type="InterPro" id="IPR050182">
    <property type="entry name" value="Cytochrome_P450_fam2"/>
</dbReference>
<dbReference type="PANTHER" id="PTHR24300:SF180">
    <property type="entry name" value="CYTOCHROME P450 2A6"/>
    <property type="match status" value="1"/>
</dbReference>
<dbReference type="PANTHER" id="PTHR24300">
    <property type="entry name" value="CYTOCHROME P450 508A4-RELATED"/>
    <property type="match status" value="1"/>
</dbReference>
<dbReference type="Pfam" id="PF00067">
    <property type="entry name" value="p450"/>
    <property type="match status" value="1"/>
</dbReference>
<dbReference type="PRINTS" id="PR00463">
    <property type="entry name" value="EP450I"/>
</dbReference>
<dbReference type="PRINTS" id="PR01684">
    <property type="entry name" value="EP450ICYP2A"/>
</dbReference>
<dbReference type="PRINTS" id="PR00385">
    <property type="entry name" value="P450"/>
</dbReference>
<dbReference type="SUPFAM" id="SSF48264">
    <property type="entry name" value="Cytochrome P450"/>
    <property type="match status" value="1"/>
</dbReference>
<dbReference type="PROSITE" id="PS00086">
    <property type="entry name" value="CYTOCHROME_P450"/>
    <property type="match status" value="1"/>
</dbReference>
<proteinExistence type="evidence at transcript level"/>
<name>CP2A3_RAT</name>